<evidence type="ECO:0000255" key="1">
    <source>
        <dbReference type="HAMAP-Rule" id="MF_00113"/>
    </source>
</evidence>
<proteinExistence type="inferred from homology"/>
<gene>
    <name evidence="1" type="primary">queA</name>
    <name type="ordered locus">Suden_1657</name>
</gene>
<sequence length="342" mass="39115">MSSSELLTSSYDFTLPEELIATQPANPRDSAKLLVYDRASDEISHVHFYDFEKFIPKNCALIFNDTKVIKARLFGQKESGGKIELLINRALDAHNIHVFTRGKVKIGTKISFGLELFAKIIELLEDGSRVVNFYKNDSILRFEEILPIIDKIGHIPLPPYIQREDNKDDEIEYQSVFAKEEGAVAAPTASLHFTKEQHERVCTKFTHAYITLHVGSGTFKPVECEKILEHTMHSEYYDISDRAKELLDSKVSILSVGTTSTRTIEFYARNKEHQRGEANLFLHPKNKPLRVDHILTNFHLPKSTLLMLVASFVGVDKAQELYKIAIEKEYRFYSYGDAMLIL</sequence>
<organism>
    <name type="scientific">Sulfurimonas denitrificans (strain ATCC 33889 / DSM 1251)</name>
    <name type="common">Thiomicrospira denitrificans (strain ATCC 33889 / DSM 1251)</name>
    <dbReference type="NCBI Taxonomy" id="326298"/>
    <lineage>
        <taxon>Bacteria</taxon>
        <taxon>Pseudomonadati</taxon>
        <taxon>Campylobacterota</taxon>
        <taxon>Epsilonproteobacteria</taxon>
        <taxon>Campylobacterales</taxon>
        <taxon>Sulfurimonadaceae</taxon>
        <taxon>Sulfurimonas</taxon>
    </lineage>
</organism>
<feature type="chain" id="PRO_0000231388" description="S-adenosylmethionine:tRNA ribosyltransferase-isomerase">
    <location>
        <begin position="1"/>
        <end position="342"/>
    </location>
</feature>
<accession>Q30PZ7</accession>
<dbReference type="EC" id="2.4.99.17" evidence="1"/>
<dbReference type="EMBL" id="CP000153">
    <property type="protein sequence ID" value="ABB44934.1"/>
    <property type="molecule type" value="Genomic_DNA"/>
</dbReference>
<dbReference type="RefSeq" id="WP_011373275.1">
    <property type="nucleotide sequence ID" value="NC_007575.1"/>
</dbReference>
<dbReference type="SMR" id="Q30PZ7"/>
<dbReference type="STRING" id="326298.Suden_1657"/>
<dbReference type="KEGG" id="tdn:Suden_1657"/>
<dbReference type="eggNOG" id="COG0809">
    <property type="taxonomic scope" value="Bacteria"/>
</dbReference>
<dbReference type="HOGENOM" id="CLU_039110_1_1_7"/>
<dbReference type="OrthoDB" id="9805933at2"/>
<dbReference type="UniPathway" id="UPA00392"/>
<dbReference type="Proteomes" id="UP000002714">
    <property type="component" value="Chromosome"/>
</dbReference>
<dbReference type="GO" id="GO:0005737">
    <property type="term" value="C:cytoplasm"/>
    <property type="evidence" value="ECO:0007669"/>
    <property type="project" value="UniProtKB-SubCell"/>
</dbReference>
<dbReference type="GO" id="GO:0051075">
    <property type="term" value="F:S-adenosylmethionine:tRNA ribosyltransferase-isomerase activity"/>
    <property type="evidence" value="ECO:0007669"/>
    <property type="project" value="UniProtKB-EC"/>
</dbReference>
<dbReference type="GO" id="GO:0008616">
    <property type="term" value="P:queuosine biosynthetic process"/>
    <property type="evidence" value="ECO:0007669"/>
    <property type="project" value="UniProtKB-UniRule"/>
</dbReference>
<dbReference type="GO" id="GO:0002099">
    <property type="term" value="P:tRNA wobble guanine modification"/>
    <property type="evidence" value="ECO:0007669"/>
    <property type="project" value="TreeGrafter"/>
</dbReference>
<dbReference type="Gene3D" id="2.40.10.240">
    <property type="entry name" value="QueA-like"/>
    <property type="match status" value="1"/>
</dbReference>
<dbReference type="Gene3D" id="3.40.1780.10">
    <property type="entry name" value="QueA-like"/>
    <property type="match status" value="1"/>
</dbReference>
<dbReference type="HAMAP" id="MF_00113">
    <property type="entry name" value="QueA"/>
    <property type="match status" value="1"/>
</dbReference>
<dbReference type="InterPro" id="IPR003699">
    <property type="entry name" value="QueA"/>
</dbReference>
<dbReference type="InterPro" id="IPR042118">
    <property type="entry name" value="QueA_dom1"/>
</dbReference>
<dbReference type="InterPro" id="IPR042119">
    <property type="entry name" value="QueA_dom2"/>
</dbReference>
<dbReference type="InterPro" id="IPR036100">
    <property type="entry name" value="QueA_sf"/>
</dbReference>
<dbReference type="NCBIfam" id="NF001140">
    <property type="entry name" value="PRK00147.1"/>
    <property type="match status" value="1"/>
</dbReference>
<dbReference type="NCBIfam" id="TIGR00113">
    <property type="entry name" value="queA"/>
    <property type="match status" value="1"/>
</dbReference>
<dbReference type="PANTHER" id="PTHR30307">
    <property type="entry name" value="S-ADENOSYLMETHIONINE:TRNA RIBOSYLTRANSFERASE-ISOMERASE"/>
    <property type="match status" value="1"/>
</dbReference>
<dbReference type="PANTHER" id="PTHR30307:SF0">
    <property type="entry name" value="S-ADENOSYLMETHIONINE:TRNA RIBOSYLTRANSFERASE-ISOMERASE"/>
    <property type="match status" value="1"/>
</dbReference>
<dbReference type="Pfam" id="PF02547">
    <property type="entry name" value="Queuosine_synth"/>
    <property type="match status" value="1"/>
</dbReference>
<dbReference type="SUPFAM" id="SSF111337">
    <property type="entry name" value="QueA-like"/>
    <property type="match status" value="1"/>
</dbReference>
<name>QUEA_SULDN</name>
<reference key="1">
    <citation type="journal article" date="2008" name="Appl. Environ. Microbiol.">
        <title>Genome of the epsilonproteobacterial chemolithoautotroph Sulfurimonas denitrificans.</title>
        <authorList>
            <person name="Sievert S.M."/>
            <person name="Scott K.M."/>
            <person name="Klotz M.G."/>
            <person name="Chain P.S.G."/>
            <person name="Hauser L.J."/>
            <person name="Hemp J."/>
            <person name="Huegler M."/>
            <person name="Land M."/>
            <person name="Lapidus A."/>
            <person name="Larimer F.W."/>
            <person name="Lucas S."/>
            <person name="Malfatti S.A."/>
            <person name="Meyer F."/>
            <person name="Paulsen I.T."/>
            <person name="Ren Q."/>
            <person name="Simon J."/>
            <person name="Bailey K."/>
            <person name="Diaz E."/>
            <person name="Fitzpatrick K.A."/>
            <person name="Glover B."/>
            <person name="Gwatney N."/>
            <person name="Korajkic A."/>
            <person name="Long A."/>
            <person name="Mobberley J.M."/>
            <person name="Pantry S.N."/>
            <person name="Pazder G."/>
            <person name="Peterson S."/>
            <person name="Quintanilla J.D."/>
            <person name="Sprinkle R."/>
            <person name="Stephens J."/>
            <person name="Thomas P."/>
            <person name="Vaughn R."/>
            <person name="Weber M.J."/>
            <person name="Wooten L.L."/>
        </authorList>
    </citation>
    <scope>NUCLEOTIDE SEQUENCE [LARGE SCALE GENOMIC DNA]</scope>
    <source>
        <strain>ATCC 33889 / DSM 1251</strain>
    </source>
</reference>
<protein>
    <recommendedName>
        <fullName evidence="1">S-adenosylmethionine:tRNA ribosyltransferase-isomerase</fullName>
        <ecNumber evidence="1">2.4.99.17</ecNumber>
    </recommendedName>
    <alternativeName>
        <fullName evidence="1">Queuosine biosynthesis protein QueA</fullName>
    </alternativeName>
</protein>
<comment type="function">
    <text evidence="1">Transfers and isomerizes the ribose moiety from AdoMet to the 7-aminomethyl group of 7-deazaguanine (preQ1-tRNA) to give epoxyqueuosine (oQ-tRNA).</text>
</comment>
<comment type="catalytic activity">
    <reaction evidence="1">
        <text>7-aminomethyl-7-carbaguanosine(34) in tRNA + S-adenosyl-L-methionine = epoxyqueuosine(34) in tRNA + adenine + L-methionine + 2 H(+)</text>
        <dbReference type="Rhea" id="RHEA:32155"/>
        <dbReference type="Rhea" id="RHEA-COMP:10342"/>
        <dbReference type="Rhea" id="RHEA-COMP:18582"/>
        <dbReference type="ChEBI" id="CHEBI:15378"/>
        <dbReference type="ChEBI" id="CHEBI:16708"/>
        <dbReference type="ChEBI" id="CHEBI:57844"/>
        <dbReference type="ChEBI" id="CHEBI:59789"/>
        <dbReference type="ChEBI" id="CHEBI:82833"/>
        <dbReference type="ChEBI" id="CHEBI:194443"/>
        <dbReference type="EC" id="2.4.99.17"/>
    </reaction>
</comment>
<comment type="pathway">
    <text evidence="1">tRNA modification; tRNA-queuosine biosynthesis.</text>
</comment>
<comment type="subunit">
    <text evidence="1">Monomer.</text>
</comment>
<comment type="subcellular location">
    <subcellularLocation>
        <location evidence="1">Cytoplasm</location>
    </subcellularLocation>
</comment>
<comment type="similarity">
    <text evidence="1">Belongs to the QueA family.</text>
</comment>
<keyword id="KW-0963">Cytoplasm</keyword>
<keyword id="KW-0671">Queuosine biosynthesis</keyword>
<keyword id="KW-1185">Reference proteome</keyword>
<keyword id="KW-0949">S-adenosyl-L-methionine</keyword>
<keyword id="KW-0808">Transferase</keyword>